<gene>
    <name evidence="1" type="primary">smpB</name>
    <name type="ordered locus">Arth_2662</name>
</gene>
<evidence type="ECO:0000255" key="1">
    <source>
        <dbReference type="HAMAP-Rule" id="MF_00023"/>
    </source>
</evidence>
<evidence type="ECO:0000256" key="2">
    <source>
        <dbReference type="SAM" id="MobiDB-lite"/>
    </source>
</evidence>
<feature type="chain" id="PRO_1000001995" description="SsrA-binding protein">
    <location>
        <begin position="1"/>
        <end position="156"/>
    </location>
</feature>
<feature type="region of interest" description="Disordered" evidence="2">
    <location>
        <begin position="131"/>
        <end position="156"/>
    </location>
</feature>
<keyword id="KW-0963">Cytoplasm</keyword>
<keyword id="KW-1185">Reference proteome</keyword>
<keyword id="KW-0694">RNA-binding</keyword>
<protein>
    <recommendedName>
        <fullName evidence="1">SsrA-binding protein</fullName>
    </recommendedName>
    <alternativeName>
        <fullName evidence="1">Small protein B</fullName>
    </alternativeName>
</protein>
<name>SSRP_ARTS2</name>
<proteinExistence type="inferred from homology"/>
<reference key="1">
    <citation type="journal article" date="2013" name="Stand. Genomic Sci.">
        <title>Complete genome sequence of Arthrobacter sp. strain FB24.</title>
        <authorList>
            <person name="Nakatsu C.H."/>
            <person name="Barabote R."/>
            <person name="Thompson S."/>
            <person name="Bruce D."/>
            <person name="Detter C."/>
            <person name="Brettin T."/>
            <person name="Han C."/>
            <person name="Beasley F."/>
            <person name="Chen W."/>
            <person name="Konopka A."/>
            <person name="Xie G."/>
        </authorList>
    </citation>
    <scope>NUCLEOTIDE SEQUENCE [LARGE SCALE GENOMIC DNA]</scope>
    <source>
        <strain>FB24</strain>
    </source>
</reference>
<dbReference type="EMBL" id="CP000454">
    <property type="protein sequence ID" value="ABK04041.1"/>
    <property type="molecule type" value="Genomic_DNA"/>
</dbReference>
<dbReference type="RefSeq" id="WP_011692503.1">
    <property type="nucleotide sequence ID" value="NC_008541.1"/>
</dbReference>
<dbReference type="SMR" id="A0JYC1"/>
<dbReference type="STRING" id="290399.Arth_2662"/>
<dbReference type="KEGG" id="art:Arth_2662"/>
<dbReference type="eggNOG" id="COG0691">
    <property type="taxonomic scope" value="Bacteria"/>
</dbReference>
<dbReference type="HOGENOM" id="CLU_108953_2_1_11"/>
<dbReference type="OrthoDB" id="9805462at2"/>
<dbReference type="Proteomes" id="UP000000754">
    <property type="component" value="Chromosome"/>
</dbReference>
<dbReference type="GO" id="GO:0005829">
    <property type="term" value="C:cytosol"/>
    <property type="evidence" value="ECO:0007669"/>
    <property type="project" value="TreeGrafter"/>
</dbReference>
<dbReference type="GO" id="GO:0003723">
    <property type="term" value="F:RNA binding"/>
    <property type="evidence" value="ECO:0007669"/>
    <property type="project" value="UniProtKB-UniRule"/>
</dbReference>
<dbReference type="GO" id="GO:0070929">
    <property type="term" value="P:trans-translation"/>
    <property type="evidence" value="ECO:0007669"/>
    <property type="project" value="UniProtKB-UniRule"/>
</dbReference>
<dbReference type="CDD" id="cd09294">
    <property type="entry name" value="SmpB"/>
    <property type="match status" value="1"/>
</dbReference>
<dbReference type="Gene3D" id="2.40.280.10">
    <property type="match status" value="1"/>
</dbReference>
<dbReference type="HAMAP" id="MF_00023">
    <property type="entry name" value="SmpB"/>
    <property type="match status" value="1"/>
</dbReference>
<dbReference type="InterPro" id="IPR023620">
    <property type="entry name" value="SmpB"/>
</dbReference>
<dbReference type="InterPro" id="IPR000037">
    <property type="entry name" value="SsrA-bd_prot"/>
</dbReference>
<dbReference type="InterPro" id="IPR020081">
    <property type="entry name" value="SsrA-bd_prot_CS"/>
</dbReference>
<dbReference type="NCBIfam" id="NF003843">
    <property type="entry name" value="PRK05422.1"/>
    <property type="match status" value="1"/>
</dbReference>
<dbReference type="NCBIfam" id="TIGR00086">
    <property type="entry name" value="smpB"/>
    <property type="match status" value="1"/>
</dbReference>
<dbReference type="PANTHER" id="PTHR30308:SF2">
    <property type="entry name" value="SSRA-BINDING PROTEIN"/>
    <property type="match status" value="1"/>
</dbReference>
<dbReference type="PANTHER" id="PTHR30308">
    <property type="entry name" value="TMRNA-BINDING COMPONENT OF TRANS-TRANSLATION TAGGING COMPLEX"/>
    <property type="match status" value="1"/>
</dbReference>
<dbReference type="Pfam" id="PF01668">
    <property type="entry name" value="SmpB"/>
    <property type="match status" value="1"/>
</dbReference>
<dbReference type="SUPFAM" id="SSF74982">
    <property type="entry name" value="Small protein B (SmpB)"/>
    <property type="match status" value="1"/>
</dbReference>
<dbReference type="PROSITE" id="PS01317">
    <property type="entry name" value="SSRP"/>
    <property type="match status" value="1"/>
</dbReference>
<sequence>MPKESGRKVVATNRKARHDYHVLDTYEAGIALMGTEVKSLREGHASMVDGFCTFYNDELWMEGIHIPEYNQGSWTNHSARRRRKLLLHREELTKISHKIRESGFTIVPLQLYFLDGKAKVEIGVARGKKEYDKRQTLREQQDKREALRVMRERNRG</sequence>
<organism>
    <name type="scientific">Arthrobacter sp. (strain FB24)</name>
    <dbReference type="NCBI Taxonomy" id="290399"/>
    <lineage>
        <taxon>Bacteria</taxon>
        <taxon>Bacillati</taxon>
        <taxon>Actinomycetota</taxon>
        <taxon>Actinomycetes</taxon>
        <taxon>Micrococcales</taxon>
        <taxon>Micrococcaceae</taxon>
        <taxon>Arthrobacter</taxon>
    </lineage>
</organism>
<accession>A0JYC1</accession>
<comment type="function">
    <text evidence="1">Required for rescue of stalled ribosomes mediated by trans-translation. Binds to transfer-messenger RNA (tmRNA), required for stable association of tmRNA with ribosomes. tmRNA and SmpB together mimic tRNA shape, replacing the anticodon stem-loop with SmpB. tmRNA is encoded by the ssrA gene; the 2 termini fold to resemble tRNA(Ala) and it encodes a 'tag peptide', a short internal open reading frame. During trans-translation Ala-aminoacylated tmRNA acts like a tRNA, entering the A-site of stalled ribosomes, displacing the stalled mRNA. The ribosome then switches to translate the ORF on the tmRNA; the nascent peptide is terminated with the 'tag peptide' encoded by the tmRNA and targeted for degradation. The ribosome is freed to recommence translation, which seems to be the essential function of trans-translation.</text>
</comment>
<comment type="subcellular location">
    <subcellularLocation>
        <location evidence="1">Cytoplasm</location>
    </subcellularLocation>
    <text evidence="1">The tmRNA-SmpB complex associates with stalled 70S ribosomes.</text>
</comment>
<comment type="similarity">
    <text evidence="1">Belongs to the SmpB family.</text>
</comment>